<protein>
    <recommendedName>
        <fullName evidence="1">Glycogen synthase</fullName>
        <ecNumber evidence="1">2.4.1.21</ecNumber>
    </recommendedName>
    <alternativeName>
        <fullName evidence="1">Starch [bacterial glycogen] synthase</fullName>
    </alternativeName>
</protein>
<keyword id="KW-0320">Glycogen biosynthesis</keyword>
<keyword id="KW-0328">Glycosyltransferase</keyword>
<keyword id="KW-1185">Reference proteome</keyword>
<keyword id="KW-0808">Transferase</keyword>
<name>GLGA_SHIFL</name>
<dbReference type="EC" id="2.4.1.21" evidence="1"/>
<dbReference type="EMBL" id="AE005674">
    <property type="protein sequence ID" value="AAN44912.1"/>
    <property type="molecule type" value="Genomic_DNA"/>
</dbReference>
<dbReference type="EMBL" id="AE014073">
    <property type="protein sequence ID" value="AAP19269.1"/>
    <property type="molecule type" value="Genomic_DNA"/>
</dbReference>
<dbReference type="RefSeq" id="NP_709205.1">
    <property type="nucleotide sequence ID" value="NC_004337.2"/>
</dbReference>
<dbReference type="RefSeq" id="WP_001197654.1">
    <property type="nucleotide sequence ID" value="NZ_WPGW01000010.1"/>
</dbReference>
<dbReference type="SMR" id="Q83PV4"/>
<dbReference type="STRING" id="198214.SF3452"/>
<dbReference type="PaxDb" id="198214-SF3452"/>
<dbReference type="GeneID" id="1026461"/>
<dbReference type="KEGG" id="sfl:SF3452"/>
<dbReference type="KEGG" id="sfx:S4311"/>
<dbReference type="PATRIC" id="fig|198214.7.peg.4072"/>
<dbReference type="HOGENOM" id="CLU_009583_18_2_6"/>
<dbReference type="UniPathway" id="UPA00164"/>
<dbReference type="Proteomes" id="UP000001006">
    <property type="component" value="Chromosome"/>
</dbReference>
<dbReference type="Proteomes" id="UP000002673">
    <property type="component" value="Chromosome"/>
</dbReference>
<dbReference type="GO" id="GO:0005829">
    <property type="term" value="C:cytosol"/>
    <property type="evidence" value="ECO:0007669"/>
    <property type="project" value="TreeGrafter"/>
</dbReference>
<dbReference type="GO" id="GO:0009011">
    <property type="term" value="F:alpha-1,4-glucan glucosyltransferase (ADP-glucose donor) activity"/>
    <property type="evidence" value="ECO:0007669"/>
    <property type="project" value="UniProtKB-UniRule"/>
</dbReference>
<dbReference type="GO" id="GO:0004373">
    <property type="term" value="F:alpha-1,4-glucan glucosyltransferase (UDP-glucose donor) activity"/>
    <property type="evidence" value="ECO:0007669"/>
    <property type="project" value="InterPro"/>
</dbReference>
<dbReference type="GO" id="GO:0005978">
    <property type="term" value="P:glycogen biosynthetic process"/>
    <property type="evidence" value="ECO:0007669"/>
    <property type="project" value="UniProtKB-UniRule"/>
</dbReference>
<dbReference type="CDD" id="cd03791">
    <property type="entry name" value="GT5_Glycogen_synthase_DULL1-like"/>
    <property type="match status" value="1"/>
</dbReference>
<dbReference type="FunFam" id="3.40.50.2000:FF:000008">
    <property type="entry name" value="Glycogen synthase"/>
    <property type="match status" value="1"/>
</dbReference>
<dbReference type="FunFam" id="3.40.50.2000:FF:000011">
    <property type="entry name" value="Glycogen synthase"/>
    <property type="match status" value="1"/>
</dbReference>
<dbReference type="Gene3D" id="3.40.50.2000">
    <property type="entry name" value="Glycogen Phosphorylase B"/>
    <property type="match status" value="2"/>
</dbReference>
<dbReference type="HAMAP" id="MF_00484">
    <property type="entry name" value="Glycogen_synth"/>
    <property type="match status" value="1"/>
</dbReference>
<dbReference type="InterPro" id="IPR001296">
    <property type="entry name" value="Glyco_trans_1"/>
</dbReference>
<dbReference type="InterPro" id="IPR011835">
    <property type="entry name" value="GS/SS"/>
</dbReference>
<dbReference type="InterPro" id="IPR013534">
    <property type="entry name" value="Starch_synth_cat_dom"/>
</dbReference>
<dbReference type="NCBIfam" id="TIGR02095">
    <property type="entry name" value="glgA"/>
    <property type="match status" value="1"/>
</dbReference>
<dbReference type="NCBIfam" id="NF001899">
    <property type="entry name" value="PRK00654.1-2"/>
    <property type="match status" value="1"/>
</dbReference>
<dbReference type="PANTHER" id="PTHR45825:SF11">
    <property type="entry name" value="ALPHA AMYLASE DOMAIN-CONTAINING PROTEIN"/>
    <property type="match status" value="1"/>
</dbReference>
<dbReference type="PANTHER" id="PTHR45825">
    <property type="entry name" value="GRANULE-BOUND STARCH SYNTHASE 1, CHLOROPLASTIC/AMYLOPLASTIC"/>
    <property type="match status" value="1"/>
</dbReference>
<dbReference type="Pfam" id="PF08323">
    <property type="entry name" value="Glyco_transf_5"/>
    <property type="match status" value="1"/>
</dbReference>
<dbReference type="Pfam" id="PF00534">
    <property type="entry name" value="Glycos_transf_1"/>
    <property type="match status" value="1"/>
</dbReference>
<dbReference type="SUPFAM" id="SSF53756">
    <property type="entry name" value="UDP-Glycosyltransferase/glycogen phosphorylase"/>
    <property type="match status" value="1"/>
</dbReference>
<feature type="chain" id="PRO_0000188645" description="Glycogen synthase">
    <location>
        <begin position="1"/>
        <end position="477"/>
    </location>
</feature>
<feature type="binding site" evidence="1">
    <location>
        <position position="15"/>
    </location>
    <ligand>
        <name>ADP-alpha-D-glucose</name>
        <dbReference type="ChEBI" id="CHEBI:57498"/>
    </ligand>
</feature>
<organism>
    <name type="scientific">Shigella flexneri</name>
    <dbReference type="NCBI Taxonomy" id="623"/>
    <lineage>
        <taxon>Bacteria</taxon>
        <taxon>Pseudomonadati</taxon>
        <taxon>Pseudomonadota</taxon>
        <taxon>Gammaproteobacteria</taxon>
        <taxon>Enterobacterales</taxon>
        <taxon>Enterobacteriaceae</taxon>
        <taxon>Shigella</taxon>
    </lineage>
</organism>
<gene>
    <name evidence="1" type="primary">glgA</name>
    <name type="ordered locus">SF3452</name>
    <name type="ordered locus">S4311</name>
</gene>
<accession>Q83PV4</accession>
<reference key="1">
    <citation type="journal article" date="2002" name="Nucleic Acids Res.">
        <title>Genome sequence of Shigella flexneri 2a: insights into pathogenicity through comparison with genomes of Escherichia coli K12 and O157.</title>
        <authorList>
            <person name="Jin Q."/>
            <person name="Yuan Z."/>
            <person name="Xu J."/>
            <person name="Wang Y."/>
            <person name="Shen Y."/>
            <person name="Lu W."/>
            <person name="Wang J."/>
            <person name="Liu H."/>
            <person name="Yang J."/>
            <person name="Yang F."/>
            <person name="Zhang X."/>
            <person name="Zhang J."/>
            <person name="Yang G."/>
            <person name="Wu H."/>
            <person name="Qu D."/>
            <person name="Dong J."/>
            <person name="Sun L."/>
            <person name="Xue Y."/>
            <person name="Zhao A."/>
            <person name="Gao Y."/>
            <person name="Zhu J."/>
            <person name="Kan B."/>
            <person name="Ding K."/>
            <person name="Chen S."/>
            <person name="Cheng H."/>
            <person name="Yao Z."/>
            <person name="He B."/>
            <person name="Chen R."/>
            <person name="Ma D."/>
            <person name="Qiang B."/>
            <person name="Wen Y."/>
            <person name="Hou Y."/>
            <person name="Yu J."/>
        </authorList>
    </citation>
    <scope>NUCLEOTIDE SEQUENCE [LARGE SCALE GENOMIC DNA]</scope>
    <source>
        <strain>301 / Serotype 2a</strain>
    </source>
</reference>
<reference key="2">
    <citation type="journal article" date="2003" name="Infect. Immun.">
        <title>Complete genome sequence and comparative genomics of Shigella flexneri serotype 2a strain 2457T.</title>
        <authorList>
            <person name="Wei J."/>
            <person name="Goldberg M.B."/>
            <person name="Burland V."/>
            <person name="Venkatesan M.M."/>
            <person name="Deng W."/>
            <person name="Fournier G."/>
            <person name="Mayhew G.F."/>
            <person name="Plunkett G. III"/>
            <person name="Rose D.J."/>
            <person name="Darling A."/>
            <person name="Mau B."/>
            <person name="Perna N.T."/>
            <person name="Payne S.M."/>
            <person name="Runyen-Janecky L.J."/>
            <person name="Zhou S."/>
            <person name="Schwartz D.C."/>
            <person name="Blattner F.R."/>
        </authorList>
    </citation>
    <scope>NUCLEOTIDE SEQUENCE [LARGE SCALE GENOMIC DNA]</scope>
    <source>
        <strain>ATCC 700930 / 2457T / Serotype 2a</strain>
    </source>
</reference>
<sequence length="477" mass="52781">MQVLHVCSEMFPLLKTGGLADVIGALPAAQIADGVDARVLLPAFPDIRRGVTDAQVVSRRDTFAGHITLLFGHYNGVGIYLIDAPHLYDRPGSPYHDTNLFAYTDNVLRFALLGWVGAEMASGLDPFWRPDVVHVHDWHAGLAPAYLAARGRPAKSVFTVHNLAYQGMFYAHHMNDIQLPWSFFNIHGLEFNGQISFLKAGLYYADHITAVSPTYAREITEPQFAYGMEGLLQQRHREGRLSGVLNGVDEKIWSPETDLLLASRYTRDTLEDKAENKSQLQIAMGLKVDDKVPLFAVVSRLTSQKGLDLVLEALPGLLEQGGQLALLGAGDPVLQEGFLAAAAEYPGQVGVQIGYHEAFSHRIMGGADVILVPSRFEPCGLTQLYGLKYGTLPLVRRTGGLADTVSDCSLENLADGVASGFVFEDSNAWSLLRAIRRAFVLWSRPSLWRFVQRQAMAMDFSWQVAAKSYRELYYRLK</sequence>
<proteinExistence type="inferred from homology"/>
<comment type="function">
    <text evidence="1">Synthesizes alpha-1,4-glucan chains using ADP-glucose.</text>
</comment>
<comment type="catalytic activity">
    <reaction evidence="1">
        <text>[(1-&gt;4)-alpha-D-glucosyl](n) + ADP-alpha-D-glucose = [(1-&gt;4)-alpha-D-glucosyl](n+1) + ADP + H(+)</text>
        <dbReference type="Rhea" id="RHEA:18189"/>
        <dbReference type="Rhea" id="RHEA-COMP:9584"/>
        <dbReference type="Rhea" id="RHEA-COMP:9587"/>
        <dbReference type="ChEBI" id="CHEBI:15378"/>
        <dbReference type="ChEBI" id="CHEBI:15444"/>
        <dbReference type="ChEBI" id="CHEBI:57498"/>
        <dbReference type="ChEBI" id="CHEBI:456216"/>
        <dbReference type="EC" id="2.4.1.21"/>
    </reaction>
</comment>
<comment type="pathway">
    <text evidence="1">Glycan biosynthesis; glycogen biosynthesis.</text>
</comment>
<comment type="similarity">
    <text evidence="1">Belongs to the glycosyltransferase 1 family. Bacterial/plant glycogen synthase subfamily.</text>
</comment>
<evidence type="ECO:0000255" key="1">
    <source>
        <dbReference type="HAMAP-Rule" id="MF_00484"/>
    </source>
</evidence>